<proteinExistence type="inferred from homology"/>
<comment type="function">
    <text evidence="1">This is one of the proteins that bind and probably mediate the attachment of the 5S RNA into the large ribosomal subunit, where it forms part of the central protuberance. In the 70S ribosome it contacts protein S13 of the 30S subunit (bridge B1b), connecting the 2 subunits; this bridge is implicated in subunit movement. Contacts the P site tRNA; the 5S rRNA and some of its associated proteins might help stabilize positioning of ribosome-bound tRNAs.</text>
</comment>
<comment type="subunit">
    <text evidence="1">Part of the 50S ribosomal subunit; part of the 5S rRNA/L5/L18/L25 subcomplex. Contacts the 5S rRNA and the P site tRNA. Forms a bridge to the 30S subunit in the 70S ribosome.</text>
</comment>
<comment type="similarity">
    <text evidence="1">Belongs to the universal ribosomal protein uL5 family.</text>
</comment>
<name>RL5_RHIR8</name>
<accession>B9JDU0</accession>
<sequence>MAEVKYEPRLKKEYVARIRAALQEKFSYANEMQIPKLDKIVINMGVGEATADSKKPTVAAADLAAIAGQKPVITHARNSIAGFKVRENMPIGAKVTLRGARMYEFLDRLVNIALPRVRDFRGLNPKSFDGRGNFAMGIKEHIVFPEINYDKVDQMWGMDIIVCTTATTDDEARALLKEFNFPFRQ</sequence>
<dbReference type="EMBL" id="CP000628">
    <property type="protein sequence ID" value="ACM26291.1"/>
    <property type="molecule type" value="Genomic_DNA"/>
</dbReference>
<dbReference type="RefSeq" id="WP_007690773.1">
    <property type="nucleotide sequence ID" value="NC_011985.1"/>
</dbReference>
<dbReference type="SMR" id="B9JDU0"/>
<dbReference type="STRING" id="311403.Arad_1988"/>
<dbReference type="GeneID" id="86848179"/>
<dbReference type="KEGG" id="ara:Arad_1988"/>
<dbReference type="eggNOG" id="COG0094">
    <property type="taxonomic scope" value="Bacteria"/>
</dbReference>
<dbReference type="HOGENOM" id="CLU_061015_2_1_5"/>
<dbReference type="Proteomes" id="UP000001600">
    <property type="component" value="Chromosome 1"/>
</dbReference>
<dbReference type="GO" id="GO:1990904">
    <property type="term" value="C:ribonucleoprotein complex"/>
    <property type="evidence" value="ECO:0007669"/>
    <property type="project" value="UniProtKB-KW"/>
</dbReference>
<dbReference type="GO" id="GO:0005840">
    <property type="term" value="C:ribosome"/>
    <property type="evidence" value="ECO:0007669"/>
    <property type="project" value="UniProtKB-KW"/>
</dbReference>
<dbReference type="GO" id="GO:0019843">
    <property type="term" value="F:rRNA binding"/>
    <property type="evidence" value="ECO:0007669"/>
    <property type="project" value="UniProtKB-UniRule"/>
</dbReference>
<dbReference type="GO" id="GO:0003735">
    <property type="term" value="F:structural constituent of ribosome"/>
    <property type="evidence" value="ECO:0007669"/>
    <property type="project" value="InterPro"/>
</dbReference>
<dbReference type="GO" id="GO:0000049">
    <property type="term" value="F:tRNA binding"/>
    <property type="evidence" value="ECO:0007669"/>
    <property type="project" value="UniProtKB-UniRule"/>
</dbReference>
<dbReference type="GO" id="GO:0006412">
    <property type="term" value="P:translation"/>
    <property type="evidence" value="ECO:0007669"/>
    <property type="project" value="UniProtKB-UniRule"/>
</dbReference>
<dbReference type="FunFam" id="3.30.1440.10:FF:000001">
    <property type="entry name" value="50S ribosomal protein L5"/>
    <property type="match status" value="1"/>
</dbReference>
<dbReference type="Gene3D" id="3.30.1440.10">
    <property type="match status" value="1"/>
</dbReference>
<dbReference type="HAMAP" id="MF_01333_B">
    <property type="entry name" value="Ribosomal_uL5_B"/>
    <property type="match status" value="1"/>
</dbReference>
<dbReference type="InterPro" id="IPR002132">
    <property type="entry name" value="Ribosomal_uL5"/>
</dbReference>
<dbReference type="InterPro" id="IPR020930">
    <property type="entry name" value="Ribosomal_uL5_bac-type"/>
</dbReference>
<dbReference type="InterPro" id="IPR031309">
    <property type="entry name" value="Ribosomal_uL5_C"/>
</dbReference>
<dbReference type="InterPro" id="IPR020929">
    <property type="entry name" value="Ribosomal_uL5_CS"/>
</dbReference>
<dbReference type="InterPro" id="IPR022803">
    <property type="entry name" value="Ribosomal_uL5_dom_sf"/>
</dbReference>
<dbReference type="InterPro" id="IPR031310">
    <property type="entry name" value="Ribosomal_uL5_N"/>
</dbReference>
<dbReference type="NCBIfam" id="NF000585">
    <property type="entry name" value="PRK00010.1"/>
    <property type="match status" value="1"/>
</dbReference>
<dbReference type="PANTHER" id="PTHR11994">
    <property type="entry name" value="60S RIBOSOMAL PROTEIN L11-RELATED"/>
    <property type="match status" value="1"/>
</dbReference>
<dbReference type="Pfam" id="PF00281">
    <property type="entry name" value="Ribosomal_L5"/>
    <property type="match status" value="1"/>
</dbReference>
<dbReference type="Pfam" id="PF00673">
    <property type="entry name" value="Ribosomal_L5_C"/>
    <property type="match status" value="1"/>
</dbReference>
<dbReference type="PIRSF" id="PIRSF002161">
    <property type="entry name" value="Ribosomal_L5"/>
    <property type="match status" value="1"/>
</dbReference>
<dbReference type="SUPFAM" id="SSF55282">
    <property type="entry name" value="RL5-like"/>
    <property type="match status" value="1"/>
</dbReference>
<dbReference type="PROSITE" id="PS00358">
    <property type="entry name" value="RIBOSOMAL_L5"/>
    <property type="match status" value="1"/>
</dbReference>
<protein>
    <recommendedName>
        <fullName evidence="1">Large ribosomal subunit protein uL5</fullName>
    </recommendedName>
    <alternativeName>
        <fullName evidence="2">50S ribosomal protein L5</fullName>
    </alternativeName>
</protein>
<feature type="chain" id="PRO_1000166101" description="Large ribosomal subunit protein uL5">
    <location>
        <begin position="1"/>
        <end position="185"/>
    </location>
</feature>
<keyword id="KW-0687">Ribonucleoprotein</keyword>
<keyword id="KW-0689">Ribosomal protein</keyword>
<keyword id="KW-0694">RNA-binding</keyword>
<keyword id="KW-0699">rRNA-binding</keyword>
<keyword id="KW-0820">tRNA-binding</keyword>
<organism>
    <name type="scientific">Rhizobium rhizogenes (strain K84 / ATCC BAA-868)</name>
    <name type="common">Agrobacterium radiobacter</name>
    <dbReference type="NCBI Taxonomy" id="311403"/>
    <lineage>
        <taxon>Bacteria</taxon>
        <taxon>Pseudomonadati</taxon>
        <taxon>Pseudomonadota</taxon>
        <taxon>Alphaproteobacteria</taxon>
        <taxon>Hyphomicrobiales</taxon>
        <taxon>Rhizobiaceae</taxon>
        <taxon>Rhizobium/Agrobacterium group</taxon>
        <taxon>Rhizobium</taxon>
    </lineage>
</organism>
<reference key="1">
    <citation type="journal article" date="2009" name="J. Bacteriol.">
        <title>Genome sequences of three Agrobacterium biovars help elucidate the evolution of multichromosome genomes in bacteria.</title>
        <authorList>
            <person name="Slater S.C."/>
            <person name="Goldman B.S."/>
            <person name="Goodner B."/>
            <person name="Setubal J.C."/>
            <person name="Farrand S.K."/>
            <person name="Nester E.W."/>
            <person name="Burr T.J."/>
            <person name="Banta L."/>
            <person name="Dickerman A.W."/>
            <person name="Paulsen I."/>
            <person name="Otten L."/>
            <person name="Suen G."/>
            <person name="Welch R."/>
            <person name="Almeida N.F."/>
            <person name="Arnold F."/>
            <person name="Burton O.T."/>
            <person name="Du Z."/>
            <person name="Ewing A."/>
            <person name="Godsy E."/>
            <person name="Heisel S."/>
            <person name="Houmiel K.L."/>
            <person name="Jhaveri J."/>
            <person name="Lu J."/>
            <person name="Miller N.M."/>
            <person name="Norton S."/>
            <person name="Chen Q."/>
            <person name="Phoolcharoen W."/>
            <person name="Ohlin V."/>
            <person name="Ondrusek D."/>
            <person name="Pride N."/>
            <person name="Stricklin S.L."/>
            <person name="Sun J."/>
            <person name="Wheeler C."/>
            <person name="Wilson L."/>
            <person name="Zhu H."/>
            <person name="Wood D.W."/>
        </authorList>
    </citation>
    <scope>NUCLEOTIDE SEQUENCE [LARGE SCALE GENOMIC DNA]</scope>
    <source>
        <strain>K84 / ATCC BAA-868</strain>
    </source>
</reference>
<gene>
    <name evidence="1" type="primary">rplE</name>
    <name type="ordered locus">Arad_1988</name>
</gene>
<evidence type="ECO:0000255" key="1">
    <source>
        <dbReference type="HAMAP-Rule" id="MF_01333"/>
    </source>
</evidence>
<evidence type="ECO:0000305" key="2"/>